<dbReference type="EMBL" id="AY753639">
    <property type="protein sequence ID" value="AAX09280.1"/>
    <property type="molecule type" value="mRNA"/>
</dbReference>
<dbReference type="EMBL" id="DQ196309">
    <property type="protein sequence ID" value="ABA28617.1"/>
    <property type="molecule type" value="mRNA"/>
</dbReference>
<dbReference type="EMBL" id="DQ196310">
    <property type="protein sequence ID" value="ABA28618.1"/>
    <property type="molecule type" value="mRNA"/>
</dbReference>
<dbReference type="EMBL" id="DQ424900">
    <property type="protein sequence ID" value="ABD83665.1"/>
    <property type="molecule type" value="mRNA"/>
</dbReference>
<dbReference type="EMBL" id="AY358444">
    <property type="protein sequence ID" value="AAQ88809.1"/>
    <property type="molecule type" value="mRNA"/>
</dbReference>
<dbReference type="EMBL" id="BC010443">
    <property type="protein sequence ID" value="AAH10443.1"/>
    <property type="status" value="ALT_INIT"/>
    <property type="molecule type" value="mRNA"/>
</dbReference>
<dbReference type="EMBL" id="BC014609">
    <property type="protein sequence ID" value="AAH14609.1"/>
    <property type="molecule type" value="mRNA"/>
</dbReference>
<dbReference type="CCDS" id="CCDS35499.1">
    <molecule id="Q1ZYL8-2"/>
</dbReference>
<dbReference type="CCDS" id="CCDS42458.1">
    <molecule id="Q1ZYL8-1"/>
</dbReference>
<dbReference type="RefSeq" id="NP_001026905.2">
    <molecule id="Q1ZYL8-2"/>
    <property type="nucleotide sequence ID" value="NM_001031735.3"/>
</dbReference>
<dbReference type="RefSeq" id="NP_001034935.1">
    <molecule id="Q1ZYL8-1"/>
    <property type="nucleotide sequence ID" value="NM_001039846.2"/>
</dbReference>
<dbReference type="BioGRID" id="125229">
    <property type="interactions" value="1"/>
</dbReference>
<dbReference type="FunCoup" id="Q1ZYL8">
    <property type="interactions" value="554"/>
</dbReference>
<dbReference type="IntAct" id="Q1ZYL8">
    <property type="interactions" value="2"/>
</dbReference>
<dbReference type="STRING" id="9606.ENSP00000378712"/>
<dbReference type="TCDB" id="8.A.55.3.1">
    <property type="family name" value="the izumo sperm-egg fusion protein 1 (izumo1) family"/>
</dbReference>
<dbReference type="GlyCosmos" id="Q1ZYL8">
    <property type="glycosylation" value="2 sites, No reported glycans"/>
</dbReference>
<dbReference type="GlyGen" id="Q1ZYL8">
    <property type="glycosylation" value="2 sites"/>
</dbReference>
<dbReference type="iPTMnet" id="Q1ZYL8"/>
<dbReference type="PhosphoSitePlus" id="Q1ZYL8"/>
<dbReference type="BioMuta" id="IZUMO4"/>
<dbReference type="DMDM" id="126215691"/>
<dbReference type="MassIVE" id="Q1ZYL8"/>
<dbReference type="PaxDb" id="9606-ENSP00000378712"/>
<dbReference type="PeptideAtlas" id="Q1ZYL8"/>
<dbReference type="ProteomicsDB" id="61254">
    <molecule id="Q1ZYL8-1"/>
</dbReference>
<dbReference type="ProteomicsDB" id="61255">
    <molecule id="Q1ZYL8-2"/>
</dbReference>
<dbReference type="ProteomicsDB" id="61256">
    <molecule id="Q1ZYL8-3"/>
</dbReference>
<dbReference type="ProteomicsDB" id="61257">
    <molecule id="Q1ZYL8-4"/>
</dbReference>
<dbReference type="Antibodypedia" id="57175">
    <property type="antibodies" value="53 antibodies from 16 providers"/>
</dbReference>
<dbReference type="DNASU" id="113177"/>
<dbReference type="Ensembl" id="ENST00000395301.8">
    <molecule id="Q1ZYL8-1"/>
    <property type="protein sequence ID" value="ENSP00000378712.3"/>
    <property type="gene ID" value="ENSG00000099840.14"/>
</dbReference>
<dbReference type="Ensembl" id="ENST00000395307.7">
    <molecule id="Q1ZYL8-2"/>
    <property type="protein sequence ID" value="ENSP00000378718.2"/>
    <property type="gene ID" value="ENSG00000099840.14"/>
</dbReference>
<dbReference type="GeneID" id="113177"/>
<dbReference type="KEGG" id="hsa:113177"/>
<dbReference type="MANE-Select" id="ENST00000395301.8">
    <property type="protein sequence ID" value="ENSP00000378712.3"/>
    <property type="RefSeq nucleotide sequence ID" value="NM_001039846.2"/>
    <property type="RefSeq protein sequence ID" value="NP_001034935.1"/>
</dbReference>
<dbReference type="UCSC" id="uc002luw.2">
    <molecule id="Q1ZYL8-1"/>
    <property type="organism name" value="human"/>
</dbReference>
<dbReference type="AGR" id="HGNC:26950"/>
<dbReference type="CTD" id="113177"/>
<dbReference type="GeneCards" id="IZUMO4"/>
<dbReference type="HGNC" id="HGNC:26950">
    <property type="gene designation" value="IZUMO4"/>
</dbReference>
<dbReference type="HPA" id="ENSG00000099840">
    <property type="expression patterns" value="Tissue enriched (testis)"/>
</dbReference>
<dbReference type="MIM" id="618897">
    <property type="type" value="gene"/>
</dbReference>
<dbReference type="neXtProt" id="NX_Q1ZYL8"/>
<dbReference type="OpenTargets" id="ENSG00000099840"/>
<dbReference type="PharmGKB" id="PA165393578"/>
<dbReference type="VEuPathDB" id="HostDB:ENSG00000099840"/>
<dbReference type="eggNOG" id="ENOG502SNMJ">
    <property type="taxonomic scope" value="Eukaryota"/>
</dbReference>
<dbReference type="GeneTree" id="ENSGT00390000015418"/>
<dbReference type="InParanoid" id="Q1ZYL8"/>
<dbReference type="OMA" id="LHCHNNF"/>
<dbReference type="OrthoDB" id="9904630at2759"/>
<dbReference type="PAN-GO" id="Q1ZYL8">
    <property type="GO annotations" value="0 GO annotations based on evolutionary models"/>
</dbReference>
<dbReference type="PhylomeDB" id="Q1ZYL8"/>
<dbReference type="TreeFam" id="TF338561"/>
<dbReference type="PathwayCommons" id="Q1ZYL8"/>
<dbReference type="Reactome" id="R-HSA-1300645">
    <property type="pathway name" value="Acrosome Reaction and Sperm:Oocyte Membrane Binding"/>
</dbReference>
<dbReference type="SignaLink" id="Q1ZYL8"/>
<dbReference type="BioGRID-ORCS" id="113177">
    <property type="hits" value="10 hits in 1148 CRISPR screens"/>
</dbReference>
<dbReference type="ChiTaRS" id="IZUMO4">
    <property type="organism name" value="human"/>
</dbReference>
<dbReference type="GenomeRNAi" id="113177"/>
<dbReference type="Pharos" id="Q1ZYL8">
    <property type="development level" value="Tdark"/>
</dbReference>
<dbReference type="PRO" id="PR:Q1ZYL8"/>
<dbReference type="Proteomes" id="UP000005640">
    <property type="component" value="Chromosome 19"/>
</dbReference>
<dbReference type="RNAct" id="Q1ZYL8">
    <property type="molecule type" value="protein"/>
</dbReference>
<dbReference type="Bgee" id="ENSG00000099840">
    <property type="expression patterns" value="Expressed in left testis and 117 other cell types or tissues"/>
</dbReference>
<dbReference type="ExpressionAtlas" id="Q1ZYL8">
    <property type="expression patterns" value="baseline and differential"/>
</dbReference>
<dbReference type="GO" id="GO:0005576">
    <property type="term" value="C:extracellular region"/>
    <property type="evidence" value="ECO:0007669"/>
    <property type="project" value="UniProtKB-SubCell"/>
</dbReference>
<dbReference type="GO" id="GO:0005634">
    <property type="term" value="C:nucleus"/>
    <property type="evidence" value="ECO:0007005"/>
    <property type="project" value="UniProtKB"/>
</dbReference>
<dbReference type="InterPro" id="IPR029389">
    <property type="entry name" value="IZUMO"/>
</dbReference>
<dbReference type="InterPro" id="IPR052868">
    <property type="entry name" value="Izumo_fusion"/>
</dbReference>
<dbReference type="PANTHER" id="PTHR37357">
    <property type="entry name" value="IZUMO SPERM-EGG FUSION PROTEIN 4"/>
    <property type="match status" value="1"/>
</dbReference>
<dbReference type="PANTHER" id="PTHR37357:SF1">
    <property type="entry name" value="IZUMO SPERM-EGG FUSION PROTEIN 4"/>
    <property type="match status" value="1"/>
</dbReference>
<dbReference type="Pfam" id="PF15005">
    <property type="entry name" value="IZUMO"/>
    <property type="match status" value="1"/>
</dbReference>
<reference key="1">
    <citation type="submission" date="2004-09" db="EMBL/GenBank/DDBJ databases">
        <title>Sperm 22 kDa protein, c113.</title>
        <authorList>
            <person name="Thompkins T.R."/>
            <person name="Herr J.C."/>
        </authorList>
    </citation>
    <scope>NUCLEOTIDE SEQUENCE [MRNA] (ISOFORM 2)</scope>
    <scope>TISSUE SPECIFICITY</scope>
    <scope>VARIANT THR-2</scope>
</reference>
<reference key="2">
    <citation type="submission" date="2005-08" db="EMBL/GenBank/DDBJ databases">
        <title>Identification of a putative SAMP14 binding protein.</title>
        <authorList>
            <person name="Shetty J."/>
            <person name="Herr J.C."/>
        </authorList>
    </citation>
    <scope>NUCLEOTIDE SEQUENCE [MRNA] (ISOFORMS 1 AND 2)</scope>
    <source>
        <tissue>Sperm</tissue>
    </source>
</reference>
<reference key="3">
    <citation type="submission" date="2006-03" db="EMBL/GenBank/DDBJ databases">
        <authorList>
            <person name="Li H."/>
            <person name="Nong W."/>
            <person name="Zhou G."/>
            <person name="Ke R."/>
            <person name="Shen C."/>
            <person name="Zhong G."/>
            <person name="Liang M."/>
            <person name="Tang Z."/>
            <person name="Huang B."/>
            <person name="Lin L."/>
            <person name="Yang S."/>
        </authorList>
    </citation>
    <scope>NUCLEOTIDE SEQUENCE [LARGE SCALE MRNA] (ISOFORM 1)</scope>
    <scope>VARIANT THR-2</scope>
</reference>
<reference key="4">
    <citation type="journal article" date="2003" name="Genome Res.">
        <title>The secreted protein discovery initiative (SPDI), a large-scale effort to identify novel human secreted and transmembrane proteins: a bioinformatics assessment.</title>
        <authorList>
            <person name="Clark H.F."/>
            <person name="Gurney A.L."/>
            <person name="Abaya E."/>
            <person name="Baker K."/>
            <person name="Baldwin D.T."/>
            <person name="Brush J."/>
            <person name="Chen J."/>
            <person name="Chow B."/>
            <person name="Chui C."/>
            <person name="Crowley C."/>
            <person name="Currell B."/>
            <person name="Deuel B."/>
            <person name="Dowd P."/>
            <person name="Eaton D."/>
            <person name="Foster J.S."/>
            <person name="Grimaldi C."/>
            <person name="Gu Q."/>
            <person name="Hass P.E."/>
            <person name="Heldens S."/>
            <person name="Huang A."/>
            <person name="Kim H.S."/>
            <person name="Klimowski L."/>
            <person name="Jin Y."/>
            <person name="Johnson S."/>
            <person name="Lee J."/>
            <person name="Lewis L."/>
            <person name="Liao D."/>
            <person name="Mark M.R."/>
            <person name="Robbie E."/>
            <person name="Sanchez C."/>
            <person name="Schoenfeld J."/>
            <person name="Seshagiri S."/>
            <person name="Simmons L."/>
            <person name="Singh J."/>
            <person name="Smith V."/>
            <person name="Stinson J."/>
            <person name="Vagts A."/>
            <person name="Vandlen R.L."/>
            <person name="Watanabe C."/>
            <person name="Wieand D."/>
            <person name="Woods K."/>
            <person name="Xie M.-H."/>
            <person name="Yansura D.G."/>
            <person name="Yi S."/>
            <person name="Yu G."/>
            <person name="Yuan J."/>
            <person name="Zhang M."/>
            <person name="Zhang Z."/>
            <person name="Goddard A.D."/>
            <person name="Wood W.I."/>
            <person name="Godowski P.J."/>
            <person name="Gray A.M."/>
        </authorList>
    </citation>
    <scope>NUCLEOTIDE SEQUENCE [LARGE SCALE MRNA] (ISOFORM 3)</scope>
</reference>
<reference key="5">
    <citation type="journal article" date="2004" name="Genome Res.">
        <title>The status, quality, and expansion of the NIH full-length cDNA project: the Mammalian Gene Collection (MGC).</title>
        <authorList>
            <consortium name="The MGC Project Team"/>
        </authorList>
    </citation>
    <scope>NUCLEOTIDE SEQUENCE [LARGE SCALE MRNA] (ISOFORMS 2 AND 4)</scope>
    <source>
        <tissue>Brain</tissue>
        <tissue>Testis</tissue>
    </source>
</reference>
<proteinExistence type="evidence at protein level"/>
<organism>
    <name type="scientific">Homo sapiens</name>
    <name type="common">Human</name>
    <dbReference type="NCBI Taxonomy" id="9606"/>
    <lineage>
        <taxon>Eukaryota</taxon>
        <taxon>Metazoa</taxon>
        <taxon>Chordata</taxon>
        <taxon>Craniata</taxon>
        <taxon>Vertebrata</taxon>
        <taxon>Euteleostomi</taxon>
        <taxon>Mammalia</taxon>
        <taxon>Eutheria</taxon>
        <taxon>Euarchontoglires</taxon>
        <taxon>Primates</taxon>
        <taxon>Haplorrhini</taxon>
        <taxon>Catarrhini</taxon>
        <taxon>Hominidae</taxon>
        <taxon>Homo</taxon>
    </lineage>
</organism>
<feature type="signal peptide" evidence="1">
    <location>
        <begin position="1"/>
        <end position="15"/>
    </location>
</feature>
<feature type="chain" id="PRO_0000278186" description="Izumo sperm-egg fusion protein 4">
    <location>
        <begin position="16"/>
        <end position="232"/>
    </location>
</feature>
<feature type="glycosylation site" description="N-linked (GlcNAc...) asparagine" evidence="1">
    <location>
        <position position="24"/>
    </location>
</feature>
<feature type="glycosylation site" description="N-linked (GlcNAc...) asparagine" evidence="1">
    <location>
        <position position="219"/>
    </location>
</feature>
<feature type="splice variant" id="VSP_023147" description="In isoform 3." evidence="4">
    <original>SRIDCQHRCGIFQYETISCNNCTDSHVACFGYNC</original>
    <variation>RHLAPGSWGGGQLSREGPSLAPEGSMPSPRGDLP</variation>
    <location>
        <begin position="124"/>
        <end position="157"/>
    </location>
</feature>
<feature type="splice variant" id="VSP_023148" description="In isoform 3." evidence="4">
    <location>
        <begin position="158"/>
        <end position="232"/>
    </location>
</feature>
<feature type="splice variant" id="VSP_023149" description="In isoform 4." evidence="5">
    <location>
        <begin position="159"/>
        <end position="232"/>
    </location>
</feature>
<feature type="splice variant" id="VSP_023150" description="In isoform 2." evidence="5 6 7">
    <original>RPRSSAFSWPGTHRATPAF</original>
    <variation>S</variation>
    <location>
        <begin position="185"/>
        <end position="203"/>
    </location>
</feature>
<feature type="sequence variant" id="VAR_030683" description="In dbSNP:rs17851210." evidence="2 3">
    <original>A</original>
    <variation>T</variation>
    <location>
        <position position="2"/>
    </location>
</feature>
<feature type="sequence variant" id="VAR_050911" description="In dbSNP:rs35585208.">
    <original>F</original>
    <variation>L</variation>
    <location>
        <position position="38"/>
    </location>
</feature>
<feature type="sequence variant" id="VAR_061630" description="In dbSNP:rs45506200.">
    <original>Y</original>
    <variation>F</variation>
    <location>
        <position position="137"/>
    </location>
</feature>
<protein>
    <recommendedName>
        <fullName>Izumo sperm-egg fusion protein 4</fullName>
    </recommendedName>
    <alternativeName>
        <fullName>Sperm 22 kDa protein c113</fullName>
    </alternativeName>
</protein>
<evidence type="ECO:0000255" key="1"/>
<evidence type="ECO:0000269" key="2">
    <source ref="1"/>
</evidence>
<evidence type="ECO:0000269" key="3">
    <source ref="3"/>
</evidence>
<evidence type="ECO:0000303" key="4">
    <source>
    </source>
</evidence>
<evidence type="ECO:0000303" key="5">
    <source>
    </source>
</evidence>
<evidence type="ECO:0000303" key="6">
    <source ref="1"/>
</evidence>
<evidence type="ECO:0000303" key="7">
    <source ref="2"/>
</evidence>
<evidence type="ECO:0000305" key="8"/>
<keyword id="KW-0025">Alternative splicing</keyword>
<keyword id="KW-0325">Glycoprotein</keyword>
<keyword id="KW-1267">Proteomics identification</keyword>
<keyword id="KW-1185">Reference proteome</keyword>
<keyword id="KW-0964">Secreted</keyword>
<keyword id="KW-0732">Signal</keyword>
<gene>
    <name type="primary">IZUMO4</name>
    <name type="synonym">C19orf36</name>
    <name type="ORF">UNQ831/PRO1758</name>
</gene>
<sequence length="232" mass="26510">MALLLCLVCLTAALAHGCLHCHSNFSKKFSFYRHHVNFKSWWVGDIPVSGALLTDWSDDTMKELHLAIPAKITREKLDQVATAVYQMMDQLYQGKMYFPGYFPNELRNIFREQVHLIQNAIIESRIDCQHRCGIFQYETISCNNCTDSHVACFGYNCESSAQWKSAVQGLLNYINNWHKQDTSMRPRSSAFSWPGTHRATPAFLVSPALRCLEPPHLANLTLEDAAECLKQH</sequence>
<accession>Q1ZYL8</accession>
<accession>A7RA93</accession>
<accession>A7RA94</accession>
<accession>Q6UXA2</accession>
<accession>Q96FT6</accession>
<accession>Q96L02</accession>
<comment type="subcellular location">
    <subcellularLocation>
        <location evidence="8">Secreted</location>
    </subcellularLocation>
</comment>
<comment type="alternative products">
    <event type="alternative splicing"/>
    <isoform>
        <id>Q1ZYL8-1</id>
        <name>1</name>
        <sequence type="displayed"/>
    </isoform>
    <isoform>
        <id>Q1ZYL8-2</id>
        <name>2</name>
        <sequence type="described" ref="VSP_023150"/>
    </isoform>
    <isoform>
        <id>Q1ZYL8-3</id>
        <name>3</name>
        <sequence type="described" ref="VSP_023147 VSP_023148"/>
    </isoform>
    <isoform>
        <id>Q1ZYL8-4</id>
        <name>4</name>
        <sequence type="described" ref="VSP_023149"/>
    </isoform>
</comment>
<comment type="tissue specificity">
    <text evidence="2">Detected in sperm.</text>
</comment>
<comment type="miscellaneous">
    <text>Izumo is the name of a Japanese shrine to marriage.</text>
</comment>
<comment type="similarity">
    <text evidence="8">Belongs to the Izumo family.</text>
</comment>
<comment type="sequence caution" evidence="8">
    <conflict type="erroneous initiation">
        <sequence resource="EMBL-CDS" id="AAH10443"/>
    </conflict>
    <text>Extended N-terminus.</text>
</comment>
<name>IZUM4_HUMAN</name>